<proteinExistence type="inferred from homology"/>
<reference key="1">
    <citation type="journal article" date="2006" name="Genome Res.">
        <title>Massive genome erosion and functional adaptations provide insights into the symbiotic lifestyle of Sodalis glossinidius in the tsetse host.</title>
        <authorList>
            <person name="Toh H."/>
            <person name="Weiss B.L."/>
            <person name="Perkin S.A.H."/>
            <person name="Yamashita A."/>
            <person name="Oshima K."/>
            <person name="Hattori M."/>
            <person name="Aksoy S."/>
        </authorList>
    </citation>
    <scope>NUCLEOTIDE SEQUENCE [LARGE SCALE GENOMIC DNA]</scope>
    <source>
        <strain>morsitans</strain>
    </source>
</reference>
<feature type="chain" id="PRO_0000270386" description="Methionine import ATP-binding protein MetN">
    <location>
        <begin position="1"/>
        <end position="343"/>
    </location>
</feature>
<feature type="domain" description="ABC transporter" evidence="1">
    <location>
        <begin position="2"/>
        <end position="241"/>
    </location>
</feature>
<feature type="binding site" evidence="1">
    <location>
        <begin position="38"/>
        <end position="45"/>
    </location>
    <ligand>
        <name>ATP</name>
        <dbReference type="ChEBI" id="CHEBI:30616"/>
    </ligand>
</feature>
<name>METN_SODGM</name>
<sequence>MITLSHITKQFTLGAQTITALSDVSLHVSAGQIYGVIGASGAGKSTLIRCVNLLERPTSGTVVVNSIDLTNLPERKLIDARRQIGMIFQHFNLLSSRTVAGNVALPLELDNLPKSAIARRVTELLALAGLEDKADSYPANLSGGQKQRVAIARALASNPKVLLCDEATSALDPATTHSILALLKDINQRLGLTILLITHEMDVVKRICDQVAVISQGELIEQDTVSEMFSHPKTPLAQAFIRSTLHLDIPQDYQQRMHRQRAPGRIPILQLEFTGLSVDAPLLSETARRFNVNNNIISAQMDYAGGVKFGIMLTEMDGDEADTASAIAYLQQHQVKVEVLGYV</sequence>
<keyword id="KW-0029">Amino-acid transport</keyword>
<keyword id="KW-0067">ATP-binding</keyword>
<keyword id="KW-0997">Cell inner membrane</keyword>
<keyword id="KW-1003">Cell membrane</keyword>
<keyword id="KW-0472">Membrane</keyword>
<keyword id="KW-0547">Nucleotide-binding</keyword>
<keyword id="KW-1278">Translocase</keyword>
<keyword id="KW-0813">Transport</keyword>
<evidence type="ECO:0000255" key="1">
    <source>
        <dbReference type="HAMAP-Rule" id="MF_01719"/>
    </source>
</evidence>
<comment type="function">
    <text evidence="1">Part of the ABC transporter complex MetNIQ involved in methionine import. Responsible for energy coupling to the transport system.</text>
</comment>
<comment type="catalytic activity">
    <reaction evidence="1">
        <text>L-methionine(out) + ATP + H2O = L-methionine(in) + ADP + phosphate + H(+)</text>
        <dbReference type="Rhea" id="RHEA:29779"/>
        <dbReference type="ChEBI" id="CHEBI:15377"/>
        <dbReference type="ChEBI" id="CHEBI:15378"/>
        <dbReference type="ChEBI" id="CHEBI:30616"/>
        <dbReference type="ChEBI" id="CHEBI:43474"/>
        <dbReference type="ChEBI" id="CHEBI:57844"/>
        <dbReference type="ChEBI" id="CHEBI:456216"/>
        <dbReference type="EC" id="7.4.2.11"/>
    </reaction>
</comment>
<comment type="catalytic activity">
    <reaction evidence="1">
        <text>D-methionine(out) + ATP + H2O = D-methionine(in) + ADP + phosphate + H(+)</text>
        <dbReference type="Rhea" id="RHEA:29767"/>
        <dbReference type="ChEBI" id="CHEBI:15377"/>
        <dbReference type="ChEBI" id="CHEBI:15378"/>
        <dbReference type="ChEBI" id="CHEBI:30616"/>
        <dbReference type="ChEBI" id="CHEBI:43474"/>
        <dbReference type="ChEBI" id="CHEBI:57932"/>
        <dbReference type="ChEBI" id="CHEBI:456216"/>
        <dbReference type="EC" id="7.4.2.11"/>
    </reaction>
</comment>
<comment type="subunit">
    <text evidence="1">The complex is composed of two ATP-binding proteins (MetN), two transmembrane proteins (MetI) and a solute-binding protein (MetQ).</text>
</comment>
<comment type="subcellular location">
    <subcellularLocation>
        <location evidence="1">Cell inner membrane</location>
        <topology evidence="1">Peripheral membrane protein</topology>
    </subcellularLocation>
</comment>
<comment type="similarity">
    <text evidence="1">Belongs to the ABC transporter superfamily. Methionine importer (TC 3.A.1.24) family.</text>
</comment>
<organism>
    <name type="scientific">Sodalis glossinidius (strain morsitans)</name>
    <dbReference type="NCBI Taxonomy" id="343509"/>
    <lineage>
        <taxon>Bacteria</taxon>
        <taxon>Pseudomonadati</taxon>
        <taxon>Pseudomonadota</taxon>
        <taxon>Gammaproteobacteria</taxon>
        <taxon>Enterobacterales</taxon>
        <taxon>Bruguierivoracaceae</taxon>
        <taxon>Sodalis</taxon>
    </lineage>
</organism>
<accession>Q2NRN5</accession>
<gene>
    <name evidence="1" type="primary">metN</name>
    <name type="ordered locus">SG1915</name>
</gene>
<dbReference type="EC" id="7.4.2.11" evidence="1"/>
<dbReference type="EMBL" id="AP008232">
    <property type="protein sequence ID" value="BAE75190.1"/>
    <property type="molecule type" value="Genomic_DNA"/>
</dbReference>
<dbReference type="RefSeq" id="WP_011411857.1">
    <property type="nucleotide sequence ID" value="NC_007712.1"/>
</dbReference>
<dbReference type="SMR" id="Q2NRN5"/>
<dbReference type="STRING" id="343509.SG1915"/>
<dbReference type="KEGG" id="sgl:SG1915"/>
<dbReference type="eggNOG" id="COG1135">
    <property type="taxonomic scope" value="Bacteria"/>
</dbReference>
<dbReference type="HOGENOM" id="CLU_000604_1_3_6"/>
<dbReference type="OrthoDB" id="9802264at2"/>
<dbReference type="BioCyc" id="SGLO343509:SGP1_RS17670-MONOMER"/>
<dbReference type="Proteomes" id="UP000001932">
    <property type="component" value="Chromosome"/>
</dbReference>
<dbReference type="GO" id="GO:0009276">
    <property type="term" value="C:Gram-negative-bacterium-type cell wall"/>
    <property type="evidence" value="ECO:0007669"/>
    <property type="project" value="InterPro"/>
</dbReference>
<dbReference type="GO" id="GO:0005886">
    <property type="term" value="C:plasma membrane"/>
    <property type="evidence" value="ECO:0007669"/>
    <property type="project" value="UniProtKB-SubCell"/>
</dbReference>
<dbReference type="GO" id="GO:0033232">
    <property type="term" value="F:ABC-type D-methionine transporter activity"/>
    <property type="evidence" value="ECO:0007669"/>
    <property type="project" value="UniProtKB-EC"/>
</dbReference>
<dbReference type="GO" id="GO:0005524">
    <property type="term" value="F:ATP binding"/>
    <property type="evidence" value="ECO:0007669"/>
    <property type="project" value="UniProtKB-KW"/>
</dbReference>
<dbReference type="GO" id="GO:0016887">
    <property type="term" value="F:ATP hydrolysis activity"/>
    <property type="evidence" value="ECO:0007669"/>
    <property type="project" value="InterPro"/>
</dbReference>
<dbReference type="CDD" id="cd03258">
    <property type="entry name" value="ABC_MetN_methionine_transporter"/>
    <property type="match status" value="1"/>
</dbReference>
<dbReference type="FunFam" id="3.40.50.300:FF:000233">
    <property type="entry name" value="Methionine import ATP-binding protein MetN"/>
    <property type="match status" value="1"/>
</dbReference>
<dbReference type="Gene3D" id="3.30.70.260">
    <property type="match status" value="1"/>
</dbReference>
<dbReference type="Gene3D" id="3.40.50.300">
    <property type="entry name" value="P-loop containing nucleotide triphosphate hydrolases"/>
    <property type="match status" value="1"/>
</dbReference>
<dbReference type="InterPro" id="IPR003593">
    <property type="entry name" value="AAA+_ATPase"/>
</dbReference>
<dbReference type="InterPro" id="IPR012692">
    <property type="entry name" value="ABC_MetN_proteobac"/>
</dbReference>
<dbReference type="InterPro" id="IPR003439">
    <property type="entry name" value="ABC_transporter-like_ATP-bd"/>
</dbReference>
<dbReference type="InterPro" id="IPR017871">
    <property type="entry name" value="ABC_transporter-like_CS"/>
</dbReference>
<dbReference type="InterPro" id="IPR045865">
    <property type="entry name" value="ACT-like_dom_sf"/>
</dbReference>
<dbReference type="InterPro" id="IPR041701">
    <property type="entry name" value="MetN_ABC"/>
</dbReference>
<dbReference type="InterPro" id="IPR050086">
    <property type="entry name" value="MetN_ABC_transporter-like"/>
</dbReference>
<dbReference type="InterPro" id="IPR018449">
    <property type="entry name" value="NIL_domain"/>
</dbReference>
<dbReference type="InterPro" id="IPR027417">
    <property type="entry name" value="P-loop_NTPase"/>
</dbReference>
<dbReference type="NCBIfam" id="TIGR02314">
    <property type="entry name" value="ABC_MetN"/>
    <property type="match status" value="1"/>
</dbReference>
<dbReference type="PANTHER" id="PTHR43166">
    <property type="entry name" value="AMINO ACID IMPORT ATP-BINDING PROTEIN"/>
    <property type="match status" value="1"/>
</dbReference>
<dbReference type="PANTHER" id="PTHR43166:SF30">
    <property type="entry name" value="METHIONINE IMPORT ATP-BINDING PROTEIN METN"/>
    <property type="match status" value="1"/>
</dbReference>
<dbReference type="Pfam" id="PF00005">
    <property type="entry name" value="ABC_tran"/>
    <property type="match status" value="1"/>
</dbReference>
<dbReference type="Pfam" id="PF09383">
    <property type="entry name" value="NIL"/>
    <property type="match status" value="1"/>
</dbReference>
<dbReference type="SMART" id="SM00382">
    <property type="entry name" value="AAA"/>
    <property type="match status" value="1"/>
</dbReference>
<dbReference type="SMART" id="SM00930">
    <property type="entry name" value="NIL"/>
    <property type="match status" value="1"/>
</dbReference>
<dbReference type="SUPFAM" id="SSF55021">
    <property type="entry name" value="ACT-like"/>
    <property type="match status" value="1"/>
</dbReference>
<dbReference type="SUPFAM" id="SSF52540">
    <property type="entry name" value="P-loop containing nucleoside triphosphate hydrolases"/>
    <property type="match status" value="1"/>
</dbReference>
<dbReference type="PROSITE" id="PS00211">
    <property type="entry name" value="ABC_TRANSPORTER_1"/>
    <property type="match status" value="1"/>
</dbReference>
<dbReference type="PROSITE" id="PS50893">
    <property type="entry name" value="ABC_TRANSPORTER_2"/>
    <property type="match status" value="1"/>
</dbReference>
<dbReference type="PROSITE" id="PS51264">
    <property type="entry name" value="METN"/>
    <property type="match status" value="1"/>
</dbReference>
<protein>
    <recommendedName>
        <fullName evidence="1">Methionine import ATP-binding protein MetN</fullName>
        <ecNumber evidence="1">7.4.2.11</ecNumber>
    </recommendedName>
</protein>